<feature type="chain" id="PRO_1000058328" description="Elongation factor P--(R)-beta-lysine ligase">
    <location>
        <begin position="1"/>
        <end position="325"/>
    </location>
</feature>
<feature type="binding site" evidence="1">
    <location>
        <begin position="76"/>
        <end position="78"/>
    </location>
    <ligand>
        <name>substrate</name>
    </ligand>
</feature>
<feature type="binding site" evidence="1">
    <location>
        <begin position="100"/>
        <end position="102"/>
    </location>
    <ligand>
        <name>ATP</name>
        <dbReference type="ChEBI" id="CHEBI:30616"/>
    </ligand>
</feature>
<feature type="binding site" evidence="1">
    <location>
        <position position="109"/>
    </location>
    <ligand>
        <name>ATP</name>
        <dbReference type="ChEBI" id="CHEBI:30616"/>
    </ligand>
</feature>
<feature type="binding site" evidence="1">
    <location>
        <position position="118"/>
    </location>
    <ligand>
        <name>substrate</name>
    </ligand>
</feature>
<feature type="binding site" evidence="1">
    <location>
        <begin position="244"/>
        <end position="245"/>
    </location>
    <ligand>
        <name>ATP</name>
        <dbReference type="ChEBI" id="CHEBI:30616"/>
    </ligand>
</feature>
<feature type="binding site" evidence="1">
    <location>
        <position position="251"/>
    </location>
    <ligand>
        <name>substrate</name>
    </ligand>
</feature>
<feature type="binding site" evidence="1">
    <location>
        <position position="300"/>
    </location>
    <ligand>
        <name>ATP</name>
        <dbReference type="ChEBI" id="CHEBI:30616"/>
    </ligand>
</feature>
<evidence type="ECO:0000255" key="1">
    <source>
        <dbReference type="HAMAP-Rule" id="MF_00174"/>
    </source>
</evidence>
<keyword id="KW-0067">ATP-binding</keyword>
<keyword id="KW-0436">Ligase</keyword>
<keyword id="KW-0547">Nucleotide-binding</keyword>
<dbReference type="EC" id="6.3.2.-" evidence="1"/>
<dbReference type="EMBL" id="CP000653">
    <property type="protein sequence ID" value="ABP59032.1"/>
    <property type="molecule type" value="Genomic_DNA"/>
</dbReference>
<dbReference type="RefSeq" id="WP_011915605.1">
    <property type="nucleotide sequence ID" value="NC_009436.1"/>
</dbReference>
<dbReference type="SMR" id="A4W5Q2"/>
<dbReference type="STRING" id="399742.Ent638_0344"/>
<dbReference type="KEGG" id="ent:Ent638_0344"/>
<dbReference type="eggNOG" id="COG2269">
    <property type="taxonomic scope" value="Bacteria"/>
</dbReference>
<dbReference type="HOGENOM" id="CLU_008255_1_1_6"/>
<dbReference type="OrthoDB" id="9802326at2"/>
<dbReference type="Proteomes" id="UP000000230">
    <property type="component" value="Chromosome"/>
</dbReference>
<dbReference type="GO" id="GO:0005829">
    <property type="term" value="C:cytosol"/>
    <property type="evidence" value="ECO:0007669"/>
    <property type="project" value="TreeGrafter"/>
</dbReference>
<dbReference type="GO" id="GO:0016880">
    <property type="term" value="F:acid-ammonia (or amide) ligase activity"/>
    <property type="evidence" value="ECO:0007669"/>
    <property type="project" value="UniProtKB-UniRule"/>
</dbReference>
<dbReference type="GO" id="GO:0005524">
    <property type="term" value="F:ATP binding"/>
    <property type="evidence" value="ECO:0007669"/>
    <property type="project" value="UniProtKB-UniRule"/>
</dbReference>
<dbReference type="GO" id="GO:0004824">
    <property type="term" value="F:lysine-tRNA ligase activity"/>
    <property type="evidence" value="ECO:0007669"/>
    <property type="project" value="InterPro"/>
</dbReference>
<dbReference type="GO" id="GO:0000049">
    <property type="term" value="F:tRNA binding"/>
    <property type="evidence" value="ECO:0007669"/>
    <property type="project" value="TreeGrafter"/>
</dbReference>
<dbReference type="GO" id="GO:0006430">
    <property type="term" value="P:lysyl-tRNA aminoacylation"/>
    <property type="evidence" value="ECO:0007669"/>
    <property type="project" value="InterPro"/>
</dbReference>
<dbReference type="FunFam" id="3.30.930.10:FF:000017">
    <property type="entry name" value="Elongation factor P--(R)-beta-lysine ligase"/>
    <property type="match status" value="1"/>
</dbReference>
<dbReference type="Gene3D" id="3.30.930.10">
    <property type="entry name" value="Bira Bifunctional Protein, Domain 2"/>
    <property type="match status" value="1"/>
</dbReference>
<dbReference type="HAMAP" id="MF_00174">
    <property type="entry name" value="EF_P_modif_A"/>
    <property type="match status" value="1"/>
</dbReference>
<dbReference type="InterPro" id="IPR004364">
    <property type="entry name" value="Aa-tRNA-synt_II"/>
</dbReference>
<dbReference type="InterPro" id="IPR006195">
    <property type="entry name" value="aa-tRNA-synth_II"/>
</dbReference>
<dbReference type="InterPro" id="IPR045864">
    <property type="entry name" value="aa-tRNA-synth_II/BPL/LPL"/>
</dbReference>
<dbReference type="InterPro" id="IPR004525">
    <property type="entry name" value="EpmA"/>
</dbReference>
<dbReference type="InterPro" id="IPR018149">
    <property type="entry name" value="Lys-tRNA-synth_II_C"/>
</dbReference>
<dbReference type="NCBIfam" id="TIGR00462">
    <property type="entry name" value="genX"/>
    <property type="match status" value="1"/>
</dbReference>
<dbReference type="NCBIfam" id="NF006828">
    <property type="entry name" value="PRK09350.1"/>
    <property type="match status" value="1"/>
</dbReference>
<dbReference type="PANTHER" id="PTHR42918:SF6">
    <property type="entry name" value="ELONGATION FACTOR P--(R)-BETA-LYSINE LIGASE"/>
    <property type="match status" value="1"/>
</dbReference>
<dbReference type="PANTHER" id="PTHR42918">
    <property type="entry name" value="LYSYL-TRNA SYNTHETASE"/>
    <property type="match status" value="1"/>
</dbReference>
<dbReference type="Pfam" id="PF00152">
    <property type="entry name" value="tRNA-synt_2"/>
    <property type="match status" value="1"/>
</dbReference>
<dbReference type="PRINTS" id="PR00982">
    <property type="entry name" value="TRNASYNTHLYS"/>
</dbReference>
<dbReference type="SUPFAM" id="SSF55681">
    <property type="entry name" value="Class II aaRS and biotin synthetases"/>
    <property type="match status" value="1"/>
</dbReference>
<dbReference type="PROSITE" id="PS50862">
    <property type="entry name" value="AA_TRNA_LIGASE_II"/>
    <property type="match status" value="1"/>
</dbReference>
<reference key="1">
    <citation type="journal article" date="2010" name="PLoS Genet.">
        <title>Genome sequence of the plant growth promoting endophytic bacterium Enterobacter sp. 638.</title>
        <authorList>
            <person name="Taghavi S."/>
            <person name="van der Lelie D."/>
            <person name="Hoffman A."/>
            <person name="Zhang Y.B."/>
            <person name="Walla M.D."/>
            <person name="Vangronsveld J."/>
            <person name="Newman L."/>
            <person name="Monchy S."/>
        </authorList>
    </citation>
    <scope>NUCLEOTIDE SEQUENCE [LARGE SCALE GENOMIC DNA]</scope>
    <source>
        <strain>638</strain>
    </source>
</reference>
<gene>
    <name evidence="1" type="primary">epmA</name>
    <name type="synonym">yjeA</name>
    <name type="ordered locus">Ent638_0344</name>
</gene>
<sequence length="325" mass="36862">MSETATWQPSASIPNLLKRAAIMTEIRRFFADRGVLEVETPCMSQATVTDIHLVPFETRFVGPGHSQGMNLYMMTSPEYHMKRLLAAGCGPVYQLCRSFRNEEMGRHHNPEFTMLEWYRPHYDMYRLMNEVDDLLQQVLDCAGAETLSYQQVFQRHLEIDPLSADKTQLREAAAKLDLSNVADTEEDRDTLLQLLFAFGVEPHIGKDRPTFVYHFPASQASLAQISTEDHRVAERFEVYYKGIELANGFHELTDAREQQQRFDQDNRKRAARGLPQQPIDTNLLEALKAGLPDSSGVALGVDRLVMLALGAEQLADVIAFTVDRA</sequence>
<comment type="function">
    <text evidence="1">With EpmB is involved in the beta-lysylation step of the post-translational modification of translation elongation factor P (EF-P). Catalyzes the ATP-dependent activation of (R)-beta-lysine produced by EpmB, forming a lysyl-adenylate, from which the beta-lysyl moiety is then transferred to the epsilon-amino group of a conserved specific lysine residue in EF-P.</text>
</comment>
<comment type="catalytic activity">
    <reaction evidence="1">
        <text>D-beta-lysine + L-lysyl-[protein] + ATP = N(6)-((3R)-3,6-diaminohexanoyl)-L-lysyl-[protein] + AMP + diphosphate + H(+)</text>
        <dbReference type="Rhea" id="RHEA:83435"/>
        <dbReference type="Rhea" id="RHEA-COMP:9752"/>
        <dbReference type="Rhea" id="RHEA-COMP:20131"/>
        <dbReference type="ChEBI" id="CHEBI:15378"/>
        <dbReference type="ChEBI" id="CHEBI:29969"/>
        <dbReference type="ChEBI" id="CHEBI:30616"/>
        <dbReference type="ChEBI" id="CHEBI:33019"/>
        <dbReference type="ChEBI" id="CHEBI:84138"/>
        <dbReference type="ChEBI" id="CHEBI:156053"/>
        <dbReference type="ChEBI" id="CHEBI:456215"/>
    </reaction>
    <physiologicalReaction direction="left-to-right" evidence="1">
        <dbReference type="Rhea" id="RHEA:83436"/>
    </physiologicalReaction>
</comment>
<comment type="subunit">
    <text evidence="1">Homodimer.</text>
</comment>
<comment type="similarity">
    <text evidence="1">Belongs to the class-II aminoacyl-tRNA synthetase family. EpmA subfamily.</text>
</comment>
<name>EPMA_ENT38</name>
<proteinExistence type="inferred from homology"/>
<protein>
    <recommendedName>
        <fullName evidence="1">Elongation factor P--(R)-beta-lysine ligase</fullName>
        <shortName evidence="1">EF-P--(R)-beta-lysine ligase</shortName>
        <ecNumber evidence="1">6.3.2.-</ecNumber>
    </recommendedName>
    <alternativeName>
        <fullName evidence="1">EF-P post-translational modification enzyme A</fullName>
    </alternativeName>
    <alternativeName>
        <fullName evidence="1">EF-P-lysine lysyltransferase</fullName>
    </alternativeName>
</protein>
<accession>A4W5Q2</accession>
<organism>
    <name type="scientific">Enterobacter sp. (strain 638)</name>
    <dbReference type="NCBI Taxonomy" id="399742"/>
    <lineage>
        <taxon>Bacteria</taxon>
        <taxon>Pseudomonadati</taxon>
        <taxon>Pseudomonadota</taxon>
        <taxon>Gammaproteobacteria</taxon>
        <taxon>Enterobacterales</taxon>
        <taxon>Enterobacteriaceae</taxon>
        <taxon>Enterobacter</taxon>
    </lineage>
</organism>